<keyword id="KW-0027">Amidation</keyword>
<keyword id="KW-0903">Direct protein sequencing</keyword>
<keyword id="KW-1015">Disulfide bond</keyword>
<keyword id="KW-0872">Ion channel impairing toxin</keyword>
<keyword id="KW-0960">Knottin</keyword>
<keyword id="KW-0528">Neurotoxin</keyword>
<keyword id="KW-0632">Potassium channel impairing toxin</keyword>
<keyword id="KW-0964">Secreted</keyword>
<keyword id="KW-0800">Toxin</keyword>
<keyword id="KW-1220">Voltage-gated potassium channel impairing toxin</keyword>
<organism>
    <name type="scientific">Psalmopoeus cambridgei</name>
    <name type="common">Trinidad chevron tarantula</name>
    <dbReference type="NCBI Taxonomy" id="179874"/>
    <lineage>
        <taxon>Eukaryota</taxon>
        <taxon>Metazoa</taxon>
        <taxon>Ecdysozoa</taxon>
        <taxon>Arthropoda</taxon>
        <taxon>Chelicerata</taxon>
        <taxon>Arachnida</taxon>
        <taxon>Araneae</taxon>
        <taxon>Mygalomorphae</taxon>
        <taxon>Theraphosidae</taxon>
        <taxon>Psalmopoeus</taxon>
    </lineage>
</organism>
<evidence type="ECO:0000250" key="1">
    <source>
        <dbReference type="UniProtKB" id="P60992"/>
    </source>
</evidence>
<evidence type="ECO:0000269" key="2">
    <source>
    </source>
</evidence>
<evidence type="ECO:0000303" key="3">
    <source>
    </source>
</evidence>
<evidence type="ECO:0000305" key="4"/>
<evidence type="ECO:0000305" key="5">
    <source>
    </source>
</evidence>
<sequence length="35" mass="3852">GACRWFLGGCKSTSDCCEHLSCKMGLDYCAWDGTF</sequence>
<reference key="1">
    <citation type="journal article" date="2006" name="Nature">
        <title>Spider toxins activate the capsaicin receptor to produce inflammatory pain.</title>
        <authorList>
            <person name="Siemens J."/>
            <person name="Zhou S."/>
            <person name="Piskorowski R."/>
            <person name="Nikai T."/>
            <person name="Lumpkin E.A."/>
            <person name="Basbaum A.I."/>
            <person name="King D."/>
            <person name="Julius D."/>
        </authorList>
    </citation>
    <scope>PROTEIN SEQUENCE</scope>
    <scope>FUNCTION</scope>
    <scope>TOXIN TARGET</scope>
    <scope>MASS SPECTROMETRY</scope>
    <scope>SUBCELLULAR LOCATION</scope>
    <scope>AMIDATION AT PHE-35</scope>
    <source>
        <tissue>Venom</tissue>
    </source>
</reference>
<accession>P0C245</accession>
<dbReference type="SMR" id="P0C245"/>
<dbReference type="ArachnoServer" id="AS000252">
    <property type="toxin name" value="tau-theraphotoxin-Pc1b"/>
</dbReference>
<dbReference type="GO" id="GO:0005576">
    <property type="term" value="C:extracellular region"/>
    <property type="evidence" value="ECO:0007669"/>
    <property type="project" value="UniProtKB-SubCell"/>
</dbReference>
<dbReference type="GO" id="GO:0008200">
    <property type="term" value="F:ion channel inhibitor activity"/>
    <property type="evidence" value="ECO:0007669"/>
    <property type="project" value="InterPro"/>
</dbReference>
<dbReference type="GO" id="GO:0015459">
    <property type="term" value="F:potassium channel regulator activity"/>
    <property type="evidence" value="ECO:0007669"/>
    <property type="project" value="UniProtKB-KW"/>
</dbReference>
<dbReference type="GO" id="GO:0090729">
    <property type="term" value="F:toxin activity"/>
    <property type="evidence" value="ECO:0007669"/>
    <property type="project" value="UniProtKB-KW"/>
</dbReference>
<dbReference type="InterPro" id="IPR011696">
    <property type="entry name" value="Huwentoxin-1"/>
</dbReference>
<dbReference type="Pfam" id="PF07740">
    <property type="entry name" value="Toxin_12"/>
    <property type="match status" value="1"/>
</dbReference>
<dbReference type="SUPFAM" id="SSF57059">
    <property type="entry name" value="omega toxin-like"/>
    <property type="match status" value="1"/>
</dbReference>
<comment type="function">
    <text evidence="2">Selectively activates the mammalian capsaicin receptor TRPV1, a non-selective cation channel expressed by sensory neurons of the pain pathway. Is more potent than VaTx1, but less potent than VaTx3. Interacts with distinct regions of the channel than capsaicin, since it only acts on the extracellular face of the channel, and capsaicin binds to the cytosolic side. Also activates avian TRPV1, which is insensitive to capsaicin. Produce weak inhibition on potassium channels Kv2.1/KCNB1.</text>
</comment>
<comment type="subcellular location">
    <subcellularLocation>
        <location evidence="2">Secreted</location>
    </subcellularLocation>
</comment>
<comment type="tissue specificity">
    <text evidence="5">Expressed by the venom gland.</text>
</comment>
<comment type="domain">
    <text evidence="1">The presence of a 'disulfide through disulfide knot' structurally defines this protein as a knottin.</text>
</comment>
<comment type="mass spectrometry" mass="3842.0" method="Unknown" evidence="2"/>
<comment type="miscellaneous">
    <text evidence="2">Negative results: does not have effect on TRPV2, TRPV3, TRPV4, TRPA1, TRPM8, Kv1.2/KCNA2 or Kv4.2/KCND2.</text>
</comment>
<comment type="similarity">
    <text evidence="4">Belongs to the neurotoxin 10 (Hwtx-1) family. 62 (Vatx) subfamily.</text>
</comment>
<feature type="chain" id="PRO_0000262452" description="Tau-theraphotoxin-Pc1b" evidence="2">
    <location>
        <begin position="1"/>
        <end position="35"/>
    </location>
</feature>
<feature type="modified residue" description="Phenylalanine amide" evidence="2">
    <location>
        <position position="35"/>
    </location>
</feature>
<feature type="disulfide bond" evidence="1">
    <location>
        <begin position="3"/>
        <end position="17"/>
    </location>
</feature>
<feature type="disulfide bond" evidence="1">
    <location>
        <begin position="10"/>
        <end position="22"/>
    </location>
</feature>
<feature type="disulfide bond" evidence="1">
    <location>
        <begin position="16"/>
        <end position="29"/>
    </location>
</feature>
<name>TX622_PSACA</name>
<proteinExistence type="evidence at protein level"/>
<protein>
    <recommendedName>
        <fullName>Tau-theraphotoxin-Pc1b</fullName>
        <shortName>Tau-TRTX-Pc1b</shortName>
    </recommendedName>
    <alternativeName>
        <fullName evidence="3">Vanillotoxin-2</fullName>
        <shortName evidence="3">VaTx2</shortName>
    </alternativeName>
</protein>